<evidence type="ECO:0000256" key="1">
    <source>
        <dbReference type="SAM" id="MobiDB-lite"/>
    </source>
</evidence>
<evidence type="ECO:0000269" key="2">
    <source>
    </source>
</evidence>
<evidence type="ECO:0000269" key="3">
    <source>
    </source>
</evidence>
<evidence type="ECO:0000269" key="4">
    <source>
    </source>
</evidence>
<evidence type="ECO:0000305" key="5"/>
<reference key="1">
    <citation type="journal article" date="2017" name="Plant J.">
        <title>Araport11: a complete reannotation of the Arabidopsis thaliana reference genome.</title>
        <authorList>
            <person name="Cheng C.Y."/>
            <person name="Krishnakumar V."/>
            <person name="Chan A.P."/>
            <person name="Thibaud-Nissen F."/>
            <person name="Schobel S."/>
            <person name="Town C.D."/>
        </authorList>
    </citation>
    <scope>GENOME REANNOTATION</scope>
    <source>
        <strain>cv. Columbia</strain>
    </source>
</reference>
<reference key="2">
    <citation type="journal article" date="1999" name="Nature">
        <title>Sequence and analysis of chromosome 2 of the plant Arabidopsis thaliana.</title>
        <authorList>
            <person name="Lin X."/>
            <person name="Kaul S."/>
            <person name="Rounsley S.D."/>
            <person name="Shea T.P."/>
            <person name="Benito M.-I."/>
            <person name="Town C.D."/>
            <person name="Fujii C.Y."/>
            <person name="Mason T.M."/>
            <person name="Bowman C.L."/>
            <person name="Barnstead M.E."/>
            <person name="Feldblyum T.V."/>
            <person name="Buell C.R."/>
            <person name="Ketchum K.A."/>
            <person name="Lee J.J."/>
            <person name="Ronning C.M."/>
            <person name="Koo H.L."/>
            <person name="Moffat K.S."/>
            <person name="Cronin L.A."/>
            <person name="Shen M."/>
            <person name="Pai G."/>
            <person name="Van Aken S."/>
            <person name="Umayam L."/>
            <person name="Tallon L.J."/>
            <person name="Gill J.E."/>
            <person name="Adams M.D."/>
            <person name="Carrera A.J."/>
            <person name="Creasy T.H."/>
            <person name="Goodman H.M."/>
            <person name="Somerville C.R."/>
            <person name="Copenhaver G.P."/>
            <person name="Preuss D."/>
            <person name="Nierman W.C."/>
            <person name="White O."/>
            <person name="Eisen J.A."/>
            <person name="Salzberg S.L."/>
            <person name="Fraser C.M."/>
            <person name="Venter J.C."/>
        </authorList>
    </citation>
    <scope>NUCLEOTIDE SEQUENCE [LARGE SCALE GENOMIC DNA] OF 1-944</scope>
    <source>
        <strain>cv. Columbia</strain>
    </source>
</reference>
<reference key="3">
    <citation type="journal article" date="1996" name="Mol. Gen. Genet.">
        <title>Characterisation of a new allele of pale cress and its role in greening in Arabidopsis thaliana.</title>
        <authorList>
            <person name="Grevelding C."/>
            <person name="Suter-Crazzolara C."/>
            <person name="Menges A."/>
            <person name="von Kempner E."/>
            <person name="Masterson R."/>
            <person name="Schell J."/>
            <person name="Reiss B."/>
        </authorList>
    </citation>
    <scope>NUCLEOTIDE SEQUENCE [MRNA] OF 927-1275</scope>
    <source>
        <strain>cv. Columbia</strain>
    </source>
</reference>
<reference key="4">
    <citation type="journal article" date="2007" name="Mol. Cell">
        <title>Purification of a plant mediator from Arabidopsis thaliana identifies PFT1 as the Med25 subunit.</title>
        <authorList>
            <person name="Baeckstroem S."/>
            <person name="Elfving N."/>
            <person name="Nilsson R."/>
            <person name="Wingsle G."/>
            <person name="Bjoerklund S."/>
        </authorList>
    </citation>
    <scope>IDENTIFICATION BY MASS SPECTROMETRY</scope>
    <scope>IDENTIFICATION IN THE MEDIATOR COMPLEX</scope>
    <scope>NOMENCLATURE</scope>
</reference>
<reference key="5">
    <citation type="journal article" date="2008" name="Genetics">
        <title>Semidominant mutations in reduced epidermal fluorescence 4 reduce phenylpropanoid content in Arabidopsis.</title>
        <authorList>
            <person name="Stout J."/>
            <person name="Romero-Severson E."/>
            <person name="Ruegger M.O."/>
            <person name="Chapple C."/>
        </authorList>
    </citation>
    <scope>FUNCTION</scope>
    <scope>MUTAGENESIS OF GLY-357; ASP-601 AND PRO-873</scope>
    <scope>DISRUPTION PHENOTYPE</scope>
    <scope>TISSUE SPECIFICITY</scope>
</reference>
<reference key="6">
    <citation type="journal article" date="2011" name="Plant Physiol.">
        <title>The Mediator complex in plants: structure, phylogeny, and expression profiling of representative genes in a dicot (Arabidopsis) and a monocot (rice) during reproduction and abiotic stress.</title>
        <authorList>
            <person name="Mathur S."/>
            <person name="Vyas S."/>
            <person name="Kapoor S."/>
            <person name="Tyagi A.K."/>
        </authorList>
    </citation>
    <scope>IDENTIFICATION</scope>
    <scope>NOMENCLATURE</scope>
</reference>
<reference key="7">
    <citation type="journal article" date="2012" name="J. Biol. Chem.">
        <title>REF4 and RFR1, subunits of the transcriptional coregulatory complex mediator, are required for phenylpropanoid homeostasis in Arabidopsis.</title>
        <authorList>
            <person name="Bonawitz N.D."/>
            <person name="Soltau W.L."/>
            <person name="Blatchley M.R."/>
            <person name="Powers B.L."/>
            <person name="Hurlock A.K."/>
            <person name="Seals L.A."/>
            <person name="Weng J.K."/>
            <person name="Stout J."/>
            <person name="Chapple C."/>
        </authorList>
    </citation>
    <scope>FUNCTION</scope>
    <scope>MUTAGENESIS OF ARG-361</scope>
</reference>
<gene>
    <name type="primary">MED33B</name>
    <name type="synonym">MED24B</name>
    <name type="synonym">MED5_1</name>
    <name type="synonym">MED5B</name>
    <name type="synonym">REF4</name>
    <name type="ordered locus">At2g48110</name>
    <name type="ORF">F11L15.1</name>
    <name type="ORF">T9J23.26</name>
</gene>
<sequence>MAPSEFQPSLWESVTSLIRSAQEKNVDPLHWALQLRLTLASAGISLPSPDLAQFLVTHIFWENHSPLSWKLLEKAISVNIVPPLLVLALLSPRVIPNRKLHPAAYRLYMELLKRHAFSFMPLIRAPGYHKTMNSIDDILHLSETFGVQDQEPGSILLAFVFSIVWELLDASLDEEGLLELTSNKRSKWPSSPHDMDLDGLENSVKRNENHDALEKANTEMAIELIQEFLQNKVTSRILHLASQNMESKTIPRGEFHAIVSSGSKLALTSDSALWLPIDLFFEDIMDGTQAAAASAVENLTGLVKALQAANSTSWHDAFLALWLAALRLVQRENLCLRYCFFMHMLEILSEERDPIEGPVPRTDTFLCVLLSVTPLAVANIIEEEESQWIDQTSSSPSNQWKEKKGKCRQGLINSLQQLGDYESLLTPPRSVQSVANQAAAKAIMFISGITNSNGSYENTSMSESASGCCKVRFSLFTLKMFVVMGVYLLCNISCWSLVMKGSPLTPSLTNSLITTPASSLAEIEKMYEVATTGSEDEKIAVASILCGASLFRGWSIQEHVIIFIVTLLSPPAPADLSGSYSHLINSAPFLNVLLVGISPIDCVHIFSLHGVVPLLAGALMPICEAFGSGVPNITWTLPTGELISSHAVFSTAFTLLLRLWRFDHPPLDYVLGDVPPVGPQPSPEYLLLVRNCRLECFGKSPKDRMARRRFSKVIDISVDPIFMDSFPRLKQWYRQHQECMASILSELKTGSPVHHIVDSLLSMMFKKANKGGSQSLTPSSGSSSLSTSGGDDSSDQLKLPAWDILEAAPFVLDAALTACAHGSLSPRELATGLKILADFLPATLGTMVSYFSSEVTRGLWKPVSMNGTDWPSPAANLASVEQQIEKILAATGVDVPRLPADGISAATLPLPLAALVSLTITYKLDKATERFLVLVGPALDSLAAACPWPCMPIVTSLWTQKVKRWSDFLIFSASRTVFHHNRDAVIQLLRSCFTCTLGLTPTSQLCSYGGVGALLGHGFGSRYSGGISTAAPGILYIKVHRSIRDVMFLTEEILSLLMFSVKSIATRELPAGQAEKLKKTKDGSRYGIGQVSLSLAMRRVKLAASLGASLVWISGGLNLVQALIKETLPSWFISVHGEEDELGGMVPMLRGYALAYFAILSSAFAWGVDSSYPASKRRPRVLWLHLEFMVSALEGKISLGCDWATWQAYVTGFVSLMVQCTPAWVLEVDVEVIKRLSKSLRQWNEQDLALALLCAGGLGTMGAATELIVETCHQH</sequence>
<dbReference type="EMBL" id="CP002685">
    <property type="protein sequence ID" value="AEC10938.1"/>
    <property type="molecule type" value="Genomic_DNA"/>
</dbReference>
<dbReference type="EMBL" id="AC006072">
    <property type="protein sequence ID" value="AAD13716.3"/>
    <property type="status" value="ALT_SEQ"/>
    <property type="molecule type" value="Genomic_DNA"/>
</dbReference>
<dbReference type="EMBL" id="X96481">
    <property type="protein sequence ID" value="CAA65335.1"/>
    <property type="molecule type" value="mRNA"/>
</dbReference>
<dbReference type="PIR" id="E84923">
    <property type="entry name" value="E84923"/>
</dbReference>
<dbReference type="RefSeq" id="NP_566125.4">
    <property type="nucleotide sequence ID" value="NM_130378.5"/>
</dbReference>
<dbReference type="FunCoup" id="F4IN69">
    <property type="interactions" value="270"/>
</dbReference>
<dbReference type="STRING" id="3702.F4IN69"/>
<dbReference type="iPTMnet" id="F4IN69"/>
<dbReference type="PaxDb" id="3702-AT2G48110.1"/>
<dbReference type="ProteomicsDB" id="250834"/>
<dbReference type="EnsemblPlants" id="AT2G48110.1">
    <property type="protein sequence ID" value="AT2G48110.1"/>
    <property type="gene ID" value="AT2G48110"/>
</dbReference>
<dbReference type="GeneID" id="819423"/>
<dbReference type="Gramene" id="AT2G48110.1">
    <property type="protein sequence ID" value="AT2G48110.1"/>
    <property type="gene ID" value="AT2G48110"/>
</dbReference>
<dbReference type="KEGG" id="ath:AT2G48110"/>
<dbReference type="Araport" id="AT2G48110"/>
<dbReference type="TAIR" id="AT2G48110">
    <property type="gene designation" value="REF4"/>
</dbReference>
<dbReference type="eggNOG" id="ENOG502QRBB">
    <property type="taxonomic scope" value="Eukaryota"/>
</dbReference>
<dbReference type="HOGENOM" id="CLU_003077_0_0_1"/>
<dbReference type="InParanoid" id="F4IN69"/>
<dbReference type="OMA" id="IFWENHT"/>
<dbReference type="PRO" id="PR:F4IN69"/>
<dbReference type="Proteomes" id="UP000006548">
    <property type="component" value="Chromosome 2"/>
</dbReference>
<dbReference type="ExpressionAtlas" id="F4IN69">
    <property type="expression patterns" value="baseline and differential"/>
</dbReference>
<dbReference type="GO" id="GO:0016592">
    <property type="term" value="C:mediator complex"/>
    <property type="evidence" value="ECO:0000314"/>
    <property type="project" value="UniProtKB"/>
</dbReference>
<dbReference type="GO" id="GO:0016020">
    <property type="term" value="C:membrane"/>
    <property type="evidence" value="ECO:0000304"/>
    <property type="project" value="TAIR"/>
</dbReference>
<dbReference type="GO" id="GO:0009698">
    <property type="term" value="P:phenylpropanoid metabolic process"/>
    <property type="evidence" value="ECO:0000315"/>
    <property type="project" value="TAIR"/>
</dbReference>
<dbReference type="GO" id="GO:2000762">
    <property type="term" value="P:regulation of phenylpropanoid metabolic process"/>
    <property type="evidence" value="ECO:0000316"/>
    <property type="project" value="TAIR"/>
</dbReference>
<dbReference type="InterPro" id="IPR039638">
    <property type="entry name" value="MED33A/B"/>
</dbReference>
<dbReference type="PANTHER" id="PTHR33739:SF7">
    <property type="entry name" value="MEDIATOR OF RNA POLYMERASE II TRANSCRIPTION SUBUNIT 33B"/>
    <property type="match status" value="1"/>
</dbReference>
<dbReference type="PANTHER" id="PTHR33739">
    <property type="entry name" value="OS07G0681500 PROTEIN"/>
    <property type="match status" value="1"/>
</dbReference>
<name>MD33B_ARATH</name>
<protein>
    <recommendedName>
        <fullName>Mediator of RNA polymerase II transcription subunit 33B</fullName>
    </recommendedName>
    <alternativeName>
        <fullName>Protein REDUCED EPIDERMAL FLUORESCENCE 4</fullName>
        <shortName>AtREF4</shortName>
    </alternativeName>
</protein>
<proteinExistence type="evidence at protein level"/>
<keyword id="KW-0539">Nucleus</keyword>
<keyword id="KW-0587">Phenylpropanoid metabolism</keyword>
<keyword id="KW-1185">Reference proteome</keyword>
<keyword id="KW-0678">Repressor</keyword>
<keyword id="KW-0804">Transcription</keyword>
<keyword id="KW-0805">Transcription regulation</keyword>
<accession>F4IN69</accession>
<accession>Q39169</accession>
<accession>Q9ZU78</accession>
<feature type="chain" id="PRO_0000418345" description="Mediator of RNA polymerase II transcription subunit 33B">
    <location>
        <begin position="1"/>
        <end position="1275"/>
    </location>
</feature>
<feature type="region of interest" description="Disordered" evidence="1">
    <location>
        <begin position="772"/>
        <end position="792"/>
    </location>
</feature>
<feature type="compositionally biased region" description="Low complexity" evidence="1">
    <location>
        <begin position="772"/>
        <end position="791"/>
    </location>
</feature>
<feature type="mutagenesis site" description="In ref4-3; Semidominant dwarfing and decreased accumulation of phenylpropanoids. Reduced phenotype; when associated with H-361. No effect; when associated with L-873." evidence="3">
    <original>G</original>
    <variation>S</variation>
    <location>
        <position position="357"/>
    </location>
</feature>
<feature type="mutagenesis site" description="Partial reversion back to wild-type phenotype; when associated with S-357." evidence="4">
    <original>R</original>
    <variation>H</variation>
    <location>
        <position position="361"/>
    </location>
</feature>
<feature type="mutagenesis site" description="In ref4-1; Semidominant dwarfing and decreased accumulation of phenylpropanoids." evidence="3">
    <original>D</original>
    <variation>N</variation>
    <location>
        <position position="601"/>
    </location>
</feature>
<feature type="mutagenesis site" description="Reversion back to wild-type phenotype; when associated with S-357." evidence="3">
    <original>P</original>
    <variation>L</variation>
    <location>
        <position position="873"/>
    </location>
</feature>
<comment type="function">
    <text evidence="3 4">Component of the Mediator complex, a coactivator involved in the regulated transcription of nearly all RNA polymerase II-dependent genes. Mediator functions as a bridge to convey information from gene-specific regulatory proteins to the basal RNA polymerase II transcription machinery. The Mediator complex, having a compact conformation in its free form, is recruited to promoters by direct interactions with regulatory proteins and serves for the assembly of a functional preinitiation complex with RNA polymerase II and the general transcription factors. Involved in the repression of phenylpropanoid biosynthesis. May compete with MED33B for common binding partners or for occupancy in Mediator.</text>
</comment>
<comment type="subunit">
    <text evidence="2">Component of the Mediator complex.</text>
</comment>
<comment type="subcellular location">
    <subcellularLocation>
        <location evidence="5">Nucleus</location>
    </subcellularLocation>
</comment>
<comment type="tissue specificity">
    <text evidence="3">Ubiquitous.</text>
</comment>
<comment type="disruption phenotype">
    <text evidence="3">No visible phenotype.</text>
</comment>
<comment type="similarity">
    <text evidence="5">Belongs to the Mediator complex subunit 33 family.</text>
</comment>
<comment type="sequence caution" evidence="5">
    <conflict type="erroneous gene model prediction">
        <sequence resource="EMBL-CDS" id="AAD13716"/>
    </conflict>
</comment>
<organism>
    <name type="scientific">Arabidopsis thaliana</name>
    <name type="common">Mouse-ear cress</name>
    <dbReference type="NCBI Taxonomy" id="3702"/>
    <lineage>
        <taxon>Eukaryota</taxon>
        <taxon>Viridiplantae</taxon>
        <taxon>Streptophyta</taxon>
        <taxon>Embryophyta</taxon>
        <taxon>Tracheophyta</taxon>
        <taxon>Spermatophyta</taxon>
        <taxon>Magnoliopsida</taxon>
        <taxon>eudicotyledons</taxon>
        <taxon>Gunneridae</taxon>
        <taxon>Pentapetalae</taxon>
        <taxon>rosids</taxon>
        <taxon>malvids</taxon>
        <taxon>Brassicales</taxon>
        <taxon>Brassicaceae</taxon>
        <taxon>Camelineae</taxon>
        <taxon>Arabidopsis</taxon>
    </lineage>
</organism>